<keyword id="KW-0028">Amino-acid biosynthesis</keyword>
<keyword id="KW-0170">Cobalt</keyword>
<keyword id="KW-0220">Diaminopimelate biosynthesis</keyword>
<keyword id="KW-0378">Hydrolase</keyword>
<keyword id="KW-0457">Lysine biosynthesis</keyword>
<keyword id="KW-0479">Metal-binding</keyword>
<keyword id="KW-0862">Zinc</keyword>
<proteinExistence type="inferred from homology"/>
<protein>
    <recommendedName>
        <fullName>Probable succinyl-diaminopimelate desuccinylase</fullName>
        <shortName>SDAP desuccinylase</shortName>
        <ecNumber>3.5.1.18</ecNumber>
    </recommendedName>
</protein>
<dbReference type="EC" id="3.5.1.18"/>
<dbReference type="EMBL" id="BX571857">
    <property type="protein sequence ID" value="CAG43732.1"/>
    <property type="molecule type" value="Genomic_DNA"/>
</dbReference>
<dbReference type="RefSeq" id="WP_000206623.1">
    <property type="nucleotide sequence ID" value="NC_002953.3"/>
</dbReference>
<dbReference type="SMR" id="Q6G7T6"/>
<dbReference type="KEGG" id="sas:SAS1926"/>
<dbReference type="HOGENOM" id="CLU_021802_2_2_9"/>
<dbReference type="UniPathway" id="UPA00034">
    <property type="reaction ID" value="UER00021"/>
</dbReference>
<dbReference type="GO" id="GO:0046872">
    <property type="term" value="F:metal ion binding"/>
    <property type="evidence" value="ECO:0007669"/>
    <property type="project" value="UniProtKB-KW"/>
</dbReference>
<dbReference type="GO" id="GO:0009014">
    <property type="term" value="F:succinyl-diaminopimelate desuccinylase activity"/>
    <property type="evidence" value="ECO:0007669"/>
    <property type="project" value="UniProtKB-EC"/>
</dbReference>
<dbReference type="GO" id="GO:0019877">
    <property type="term" value="P:diaminopimelate biosynthetic process"/>
    <property type="evidence" value="ECO:0007669"/>
    <property type="project" value="UniProtKB-KW"/>
</dbReference>
<dbReference type="GO" id="GO:0009089">
    <property type="term" value="P:lysine biosynthetic process via diaminopimelate"/>
    <property type="evidence" value="ECO:0007669"/>
    <property type="project" value="UniProtKB-UniPathway"/>
</dbReference>
<dbReference type="CDD" id="cd08659">
    <property type="entry name" value="M20_ArgE_DapE-like"/>
    <property type="match status" value="1"/>
</dbReference>
<dbReference type="Gene3D" id="3.30.70.360">
    <property type="match status" value="1"/>
</dbReference>
<dbReference type="Gene3D" id="3.40.630.10">
    <property type="entry name" value="Zn peptidases"/>
    <property type="match status" value="2"/>
</dbReference>
<dbReference type="InterPro" id="IPR010182">
    <property type="entry name" value="ArgE/DapE"/>
</dbReference>
<dbReference type="InterPro" id="IPR001261">
    <property type="entry name" value="ArgE/DapE_CS"/>
</dbReference>
<dbReference type="InterPro" id="IPR036264">
    <property type="entry name" value="Bact_exopeptidase_dim_dom"/>
</dbReference>
<dbReference type="InterPro" id="IPR002933">
    <property type="entry name" value="Peptidase_M20"/>
</dbReference>
<dbReference type="InterPro" id="IPR011650">
    <property type="entry name" value="Peptidase_M20_dimer"/>
</dbReference>
<dbReference type="InterPro" id="IPR050072">
    <property type="entry name" value="Peptidase_M20A"/>
</dbReference>
<dbReference type="NCBIfam" id="TIGR01910">
    <property type="entry name" value="DapE-ArgE"/>
    <property type="match status" value="1"/>
</dbReference>
<dbReference type="NCBIfam" id="NF006365">
    <property type="entry name" value="PRK08588.1"/>
    <property type="match status" value="1"/>
</dbReference>
<dbReference type="PANTHER" id="PTHR43808">
    <property type="entry name" value="ACETYLORNITHINE DEACETYLASE"/>
    <property type="match status" value="1"/>
</dbReference>
<dbReference type="PANTHER" id="PTHR43808:SF8">
    <property type="entry name" value="PEPTIDASE M20 DIMERISATION DOMAIN-CONTAINING PROTEIN"/>
    <property type="match status" value="1"/>
</dbReference>
<dbReference type="Pfam" id="PF07687">
    <property type="entry name" value="M20_dimer"/>
    <property type="match status" value="1"/>
</dbReference>
<dbReference type="Pfam" id="PF01546">
    <property type="entry name" value="Peptidase_M20"/>
    <property type="match status" value="1"/>
</dbReference>
<dbReference type="SUPFAM" id="SSF55031">
    <property type="entry name" value="Bacterial exopeptidase dimerisation domain"/>
    <property type="match status" value="1"/>
</dbReference>
<dbReference type="SUPFAM" id="SSF53187">
    <property type="entry name" value="Zn-dependent exopeptidases"/>
    <property type="match status" value="1"/>
</dbReference>
<dbReference type="PROSITE" id="PS00758">
    <property type="entry name" value="ARGE_DAPE_CPG2_1"/>
    <property type="match status" value="1"/>
</dbReference>
<dbReference type="PROSITE" id="PS00759">
    <property type="entry name" value="ARGE_DAPE_CPG2_2"/>
    <property type="match status" value="1"/>
</dbReference>
<comment type="catalytic activity">
    <reaction>
        <text>N-succinyl-(2S,6S)-2,6-diaminopimelate + H2O = (2S,6S)-2,6-diaminopimelate + succinate</text>
        <dbReference type="Rhea" id="RHEA:22608"/>
        <dbReference type="ChEBI" id="CHEBI:15377"/>
        <dbReference type="ChEBI" id="CHEBI:30031"/>
        <dbReference type="ChEBI" id="CHEBI:57609"/>
        <dbReference type="ChEBI" id="CHEBI:58087"/>
        <dbReference type="EC" id="3.5.1.18"/>
    </reaction>
</comment>
<comment type="cofactor">
    <cofactor evidence="1">
        <name>Zn(2+)</name>
        <dbReference type="ChEBI" id="CHEBI:29105"/>
    </cofactor>
    <cofactor evidence="1">
        <name>Co(2+)</name>
        <dbReference type="ChEBI" id="CHEBI:48828"/>
    </cofactor>
    <text evidence="1">Binds 2 Zn(2+) or Co(2+) ions per subunit.</text>
</comment>
<comment type="pathway">
    <text>Amino-acid biosynthesis; L-lysine biosynthesis via DAP pathway; LL-2,6-diaminopimelate from (S)-tetrahydrodipicolinate (succinylase route): step 3/3.</text>
</comment>
<comment type="similarity">
    <text evidence="2">Belongs to the peptidase M20A family.</text>
</comment>
<feature type="chain" id="PRO_0000185267" description="Probable succinyl-diaminopimelate desuccinylase">
    <location>
        <begin position="1"/>
        <end position="407"/>
    </location>
</feature>
<feature type="active site" evidence="1">
    <location>
        <position position="74"/>
    </location>
</feature>
<feature type="active site" description="Proton acceptor" evidence="1">
    <location>
        <position position="139"/>
    </location>
</feature>
<feature type="binding site" evidence="1">
    <location>
        <position position="72"/>
    </location>
    <ligand>
        <name>Zn(2+)</name>
        <dbReference type="ChEBI" id="CHEBI:29105"/>
        <label>1</label>
    </ligand>
</feature>
<feature type="binding site" evidence="1">
    <location>
        <position position="105"/>
    </location>
    <ligand>
        <name>Zn(2+)</name>
        <dbReference type="ChEBI" id="CHEBI:29105"/>
        <label>1</label>
    </ligand>
</feature>
<feature type="binding site" evidence="1">
    <location>
        <position position="105"/>
    </location>
    <ligand>
        <name>Zn(2+)</name>
        <dbReference type="ChEBI" id="CHEBI:29105"/>
        <label>2</label>
    </ligand>
</feature>
<feature type="binding site" evidence="1">
    <location>
        <position position="140"/>
    </location>
    <ligand>
        <name>Zn(2+)</name>
        <dbReference type="ChEBI" id="CHEBI:29105"/>
        <label>2</label>
    </ligand>
</feature>
<feature type="binding site" evidence="1">
    <location>
        <position position="165"/>
    </location>
    <ligand>
        <name>Zn(2+)</name>
        <dbReference type="ChEBI" id="CHEBI:29105"/>
        <label>1</label>
    </ligand>
</feature>
<feature type="binding site" evidence="1">
    <location>
        <position position="378"/>
    </location>
    <ligand>
        <name>Zn(2+)</name>
        <dbReference type="ChEBI" id="CHEBI:29105"/>
        <label>2</label>
    </ligand>
</feature>
<name>DAPE_STAAS</name>
<sequence length="407" mass="45113">MTTFSEKEKIQLLADIVELQTENNNEIDVCNYLKDLFDKYDIKSEILKVNEHRANIVAEIGNGSPILALSGHMDVVDAGNQDNWTYPPFQLTEKAGKLYGRGTTDMKGGLMALVITLIELKEQNQLPQGTIRLLATAGEEKEQEGAKLLADKGYLDDVDGLIIAEPTGSGIYYAHKGSMSCKVTATGKAVHSSVPFIGDNAIDTLLEFYNLFKEKYSELKQQDTKHELDVAPMFKSLIGKEISEEDANYASGLTAVCSIINGGKQFNSVPDEASLEFNVRPVPEYDNDFIESFFQNIINDVDSNKLSLDIPSNHRPVTSDKNSKLITTIKDVASSYVEQDEIFVSALVGATDASSFLGDNKDNVDLAIFGPGNPLMAHQIDEYIEKDMYLKYIDIFKEASIKYLKEK</sequence>
<evidence type="ECO:0000250" key="1"/>
<evidence type="ECO:0000305" key="2"/>
<reference key="1">
    <citation type="journal article" date="2004" name="Proc. Natl. Acad. Sci. U.S.A.">
        <title>Complete genomes of two clinical Staphylococcus aureus strains: evidence for the rapid evolution of virulence and drug resistance.</title>
        <authorList>
            <person name="Holden M.T.G."/>
            <person name="Feil E.J."/>
            <person name="Lindsay J.A."/>
            <person name="Peacock S.J."/>
            <person name="Day N.P.J."/>
            <person name="Enright M.C."/>
            <person name="Foster T.J."/>
            <person name="Moore C.E."/>
            <person name="Hurst L."/>
            <person name="Atkin R."/>
            <person name="Barron A."/>
            <person name="Bason N."/>
            <person name="Bentley S.D."/>
            <person name="Chillingworth C."/>
            <person name="Chillingworth T."/>
            <person name="Churcher C."/>
            <person name="Clark L."/>
            <person name="Corton C."/>
            <person name="Cronin A."/>
            <person name="Doggett J."/>
            <person name="Dowd L."/>
            <person name="Feltwell T."/>
            <person name="Hance Z."/>
            <person name="Harris B."/>
            <person name="Hauser H."/>
            <person name="Holroyd S."/>
            <person name="Jagels K."/>
            <person name="James K.D."/>
            <person name="Lennard N."/>
            <person name="Line A."/>
            <person name="Mayes R."/>
            <person name="Moule S."/>
            <person name="Mungall K."/>
            <person name="Ormond D."/>
            <person name="Quail M.A."/>
            <person name="Rabbinowitsch E."/>
            <person name="Rutherford K.M."/>
            <person name="Sanders M."/>
            <person name="Sharp S."/>
            <person name="Simmonds M."/>
            <person name="Stevens K."/>
            <person name="Whitehead S."/>
            <person name="Barrell B.G."/>
            <person name="Spratt B.G."/>
            <person name="Parkhill J."/>
        </authorList>
    </citation>
    <scope>NUCLEOTIDE SEQUENCE [LARGE SCALE GENOMIC DNA]</scope>
    <source>
        <strain>MSSA476</strain>
    </source>
</reference>
<gene>
    <name type="primary">dapE</name>
    <name type="ordered locus">SAS1926</name>
</gene>
<accession>Q6G7T6</accession>
<organism>
    <name type="scientific">Staphylococcus aureus (strain MSSA476)</name>
    <dbReference type="NCBI Taxonomy" id="282459"/>
    <lineage>
        <taxon>Bacteria</taxon>
        <taxon>Bacillati</taxon>
        <taxon>Bacillota</taxon>
        <taxon>Bacilli</taxon>
        <taxon>Bacillales</taxon>
        <taxon>Staphylococcaceae</taxon>
        <taxon>Staphylococcus</taxon>
    </lineage>
</organism>